<sequence>MEKLYESMYQLIVETSTKLPKDVRRAILKAKQRENAGTRAAMSLATITENIKMADENVSPICQDTGLPTFKIKVPVGINQIQIKETIKKAIAQATKDGKLRPNSVDSLTGENSGDNLGEGLPVVKFEQWEKDYMDVRLILKGGGCENKNIQYSLPCELEGLGRAGRDLDGIRKCILHAVYQAQGQGCSAGFIGVGIGGDRSAGYDLAKEQLFREVDDVNPNEELRQLEEYIMENANKLGIGTMGFGGETTLLGCKVGAMHRIPASFFVSVAYNCWAFRRLGVHIDPNTGEIIKWLYQDGEDVDFQENAAQEEHLASTDSERRVITLQAPITEEQIRELKVGDVVRINGIIYTGRDAIHKYLMDHDAPVDLNGQIIYHCGPVMLKDENGNWEVKAAGPTTSIREEPYQGDIMKKFGIRAVMGKGGMGQKTLQALKEHGGVYLNAIGGAAQYYADCIEAVEGVDLLEFGIPEAMWHLRVKDFTAVVTMDSHGNSLHEDIEKSSLEKLSQFKEPVFS</sequence>
<accession>Q04718</accession>
<organism>
    <name type="scientific">Geobacillus stearothermophilus</name>
    <name type="common">Bacillus stearothermophilus</name>
    <dbReference type="NCBI Taxonomy" id="1422"/>
    <lineage>
        <taxon>Bacteria</taxon>
        <taxon>Bacillati</taxon>
        <taxon>Bacillota</taxon>
        <taxon>Bacilli</taxon>
        <taxon>Bacillales</taxon>
        <taxon>Anoxybacillaceae</taxon>
        <taxon>Geobacillus</taxon>
    </lineage>
</organism>
<proteinExistence type="inferred from homology"/>
<gene>
    <name type="primary">fumA</name>
</gene>
<name>FUMA_GEOSE</name>
<comment type="function">
    <text evidence="2">Catalyzes the reversible hydration of fumarate to (S)-malate.</text>
</comment>
<comment type="catalytic activity">
    <reaction evidence="2">
        <text>(S)-malate = fumarate + H2O</text>
        <dbReference type="Rhea" id="RHEA:12460"/>
        <dbReference type="ChEBI" id="CHEBI:15377"/>
        <dbReference type="ChEBI" id="CHEBI:15589"/>
        <dbReference type="ChEBI" id="CHEBI:29806"/>
        <dbReference type="EC" id="4.2.1.2"/>
    </reaction>
</comment>
<comment type="cofactor">
    <cofactor evidence="2">
        <name>[4Fe-4S] cluster</name>
        <dbReference type="ChEBI" id="CHEBI:49883"/>
    </cofactor>
    <text evidence="2">Binds 1 [4Fe-4S] cluster per subunit.</text>
</comment>
<comment type="pathway">
    <text evidence="2">Carbohydrate metabolism; tricarboxylic acid cycle; (S)-malate from fumarate: step 1/1.</text>
</comment>
<comment type="subunit">
    <text evidence="2">Homodimer.</text>
</comment>
<comment type="similarity">
    <text evidence="3">Belongs to the class-I fumarase family.</text>
</comment>
<feature type="chain" id="PRO_0000195655" description="Putative fumarate hydratase class I">
    <location>
        <begin position="1"/>
        <end position="514"/>
    </location>
</feature>
<feature type="binding site" evidence="1">
    <location>
        <position position="62"/>
    </location>
    <ligand>
        <name>[4Fe-4S] cluster</name>
        <dbReference type="ChEBI" id="CHEBI:49883"/>
    </ligand>
</feature>
<feature type="binding site" evidence="1">
    <location>
        <position position="187"/>
    </location>
    <ligand>
        <name>[4Fe-4S] cluster</name>
        <dbReference type="ChEBI" id="CHEBI:49883"/>
    </ligand>
</feature>
<feature type="binding site" evidence="1">
    <location>
        <position position="274"/>
    </location>
    <ligand>
        <name>[4Fe-4S] cluster</name>
        <dbReference type="ChEBI" id="CHEBI:49883"/>
    </ligand>
</feature>
<evidence type="ECO:0000250" key="1">
    <source>
        <dbReference type="UniProtKB" id="E9AE57"/>
    </source>
</evidence>
<evidence type="ECO:0000250" key="2">
    <source>
        <dbReference type="UniProtKB" id="P0AC33"/>
    </source>
</evidence>
<evidence type="ECO:0000305" key="3"/>
<keyword id="KW-0004">4Fe-4S</keyword>
<keyword id="KW-0408">Iron</keyword>
<keyword id="KW-0411">Iron-sulfur</keyword>
<keyword id="KW-0456">Lyase</keyword>
<keyword id="KW-0479">Metal-binding</keyword>
<keyword id="KW-0816">Tricarboxylic acid cycle</keyword>
<reference key="1">
    <citation type="journal article" date="1993" name="J. Gen. Microbiol.">
        <title>Molecular and enzymological evidence for two classes of fumarase in Bacillus stearothermophilus (var. non-diastaticus).</title>
        <authorList>
            <person name="Reaney S.K."/>
            <person name="Bungard S.J."/>
            <person name="Guest J.R."/>
        </authorList>
    </citation>
    <scope>NUCLEOTIDE SEQUENCE [GENOMIC DNA]</scope>
    <source>
        <strain>DSM 2334 / Var. Non-diastaticus</strain>
    </source>
</reference>
<dbReference type="EC" id="4.2.1.2"/>
<dbReference type="EMBL" id="L05611">
    <property type="protein sequence ID" value="AAA72317.1"/>
    <property type="molecule type" value="Genomic_DNA"/>
</dbReference>
<dbReference type="PIR" id="A47692">
    <property type="entry name" value="A47692"/>
</dbReference>
<dbReference type="SMR" id="Q04718"/>
<dbReference type="UniPathway" id="UPA00223">
    <property type="reaction ID" value="UER01007"/>
</dbReference>
<dbReference type="GO" id="GO:0051539">
    <property type="term" value="F:4 iron, 4 sulfur cluster binding"/>
    <property type="evidence" value="ECO:0007669"/>
    <property type="project" value="UniProtKB-KW"/>
</dbReference>
<dbReference type="GO" id="GO:0004333">
    <property type="term" value="F:fumarate hydratase activity"/>
    <property type="evidence" value="ECO:0007669"/>
    <property type="project" value="UniProtKB-EC"/>
</dbReference>
<dbReference type="GO" id="GO:0046872">
    <property type="term" value="F:metal ion binding"/>
    <property type="evidence" value="ECO:0007669"/>
    <property type="project" value="UniProtKB-KW"/>
</dbReference>
<dbReference type="GO" id="GO:0006099">
    <property type="term" value="P:tricarboxylic acid cycle"/>
    <property type="evidence" value="ECO:0007669"/>
    <property type="project" value="UniProtKB-UniPathway"/>
</dbReference>
<dbReference type="Gene3D" id="3.20.130.10">
    <property type="entry name" value="Fe-S hydro-lyase, tartrate dehydratase beta-type, catalytic domain"/>
    <property type="match status" value="1"/>
</dbReference>
<dbReference type="InterPro" id="IPR004646">
    <property type="entry name" value="Fe-S_hydro-lyase_TtdA-typ_cat"/>
</dbReference>
<dbReference type="InterPro" id="IPR004647">
    <property type="entry name" value="Fe-S_hydro-lyase_TtdB-typ_cat"/>
</dbReference>
<dbReference type="InterPro" id="IPR036660">
    <property type="entry name" value="Fe-S_hydroAse_TtdB_cat_sf"/>
</dbReference>
<dbReference type="InterPro" id="IPR011167">
    <property type="entry name" value="Fe_dep_fumarate_hydratase"/>
</dbReference>
<dbReference type="NCBIfam" id="TIGR00722">
    <property type="entry name" value="ttdA_fumA_fumB"/>
    <property type="match status" value="1"/>
</dbReference>
<dbReference type="NCBIfam" id="TIGR00723">
    <property type="entry name" value="ttdB_fumA_fumB"/>
    <property type="match status" value="1"/>
</dbReference>
<dbReference type="PANTHER" id="PTHR43351">
    <property type="entry name" value="L(+)-TARTRATE DEHYDRATASE SUBUNIT BETA"/>
    <property type="match status" value="1"/>
</dbReference>
<dbReference type="PANTHER" id="PTHR43351:SF2">
    <property type="entry name" value="L(+)-TARTRATE DEHYDRATASE SUBUNIT BETA-RELATED"/>
    <property type="match status" value="1"/>
</dbReference>
<dbReference type="Pfam" id="PF05681">
    <property type="entry name" value="Fumerase"/>
    <property type="match status" value="1"/>
</dbReference>
<dbReference type="Pfam" id="PF05683">
    <property type="entry name" value="Fumerase_C"/>
    <property type="match status" value="1"/>
</dbReference>
<dbReference type="PIRSF" id="PIRSF001394">
    <property type="entry name" value="Fe_dep_fumar_hy"/>
    <property type="match status" value="1"/>
</dbReference>
<dbReference type="SUPFAM" id="SSF117457">
    <property type="entry name" value="FumA C-terminal domain-like"/>
    <property type="match status" value="1"/>
</dbReference>
<protein>
    <recommendedName>
        <fullName>Putative fumarate hydratase class I</fullName>
        <shortName>Fumarase</shortName>
        <ecNumber>4.2.1.2</ecNumber>
    </recommendedName>
</protein>